<feature type="chain" id="PRO_1000149494" description="2,3-bisphosphoglycerate-dependent phosphoglycerate mutase">
    <location>
        <begin position="1"/>
        <end position="211"/>
    </location>
</feature>
<feature type="active site" description="Tele-phosphohistidine intermediate" evidence="1">
    <location>
        <position position="10"/>
    </location>
</feature>
<feature type="active site" description="Proton donor/acceptor" evidence="1">
    <location>
        <position position="88"/>
    </location>
</feature>
<feature type="binding site" evidence="1">
    <location>
        <begin position="9"/>
        <end position="16"/>
    </location>
    <ligand>
        <name>substrate</name>
    </ligand>
</feature>
<feature type="binding site" evidence="1">
    <location>
        <begin position="22"/>
        <end position="23"/>
    </location>
    <ligand>
        <name>substrate</name>
    </ligand>
</feature>
<feature type="binding site" evidence="1">
    <location>
        <position position="61"/>
    </location>
    <ligand>
        <name>substrate</name>
    </ligand>
</feature>
<feature type="binding site" evidence="1">
    <location>
        <begin position="88"/>
        <end position="91"/>
    </location>
    <ligand>
        <name>substrate</name>
    </ligand>
</feature>
<feature type="binding site" evidence="1">
    <location>
        <position position="99"/>
    </location>
    <ligand>
        <name>substrate</name>
    </ligand>
</feature>
<feature type="binding site" evidence="1">
    <location>
        <begin position="115"/>
        <end position="116"/>
    </location>
    <ligand>
        <name>substrate</name>
    </ligand>
</feature>
<feature type="binding site" evidence="1">
    <location>
        <begin position="159"/>
        <end position="160"/>
    </location>
    <ligand>
        <name>substrate</name>
    </ligand>
</feature>
<feature type="site" description="Transition state stabilizer" evidence="1">
    <location>
        <position position="158"/>
    </location>
</feature>
<reference key="1">
    <citation type="journal article" date="2009" name="J. Bacteriol.">
        <title>Genome sequences of three Agrobacterium biovars help elucidate the evolution of multichromosome genomes in bacteria.</title>
        <authorList>
            <person name="Slater S.C."/>
            <person name="Goldman B.S."/>
            <person name="Goodner B."/>
            <person name="Setubal J.C."/>
            <person name="Farrand S.K."/>
            <person name="Nester E.W."/>
            <person name="Burr T.J."/>
            <person name="Banta L."/>
            <person name="Dickerman A.W."/>
            <person name="Paulsen I."/>
            <person name="Otten L."/>
            <person name="Suen G."/>
            <person name="Welch R."/>
            <person name="Almeida N.F."/>
            <person name="Arnold F."/>
            <person name="Burton O.T."/>
            <person name="Du Z."/>
            <person name="Ewing A."/>
            <person name="Godsy E."/>
            <person name="Heisel S."/>
            <person name="Houmiel K.L."/>
            <person name="Jhaveri J."/>
            <person name="Lu J."/>
            <person name="Miller N.M."/>
            <person name="Norton S."/>
            <person name="Chen Q."/>
            <person name="Phoolcharoen W."/>
            <person name="Ohlin V."/>
            <person name="Ondrusek D."/>
            <person name="Pride N."/>
            <person name="Stricklin S.L."/>
            <person name="Sun J."/>
            <person name="Wheeler C."/>
            <person name="Wilson L."/>
            <person name="Zhu H."/>
            <person name="Wood D.W."/>
        </authorList>
    </citation>
    <scope>NUCLEOTIDE SEQUENCE [LARGE SCALE GENOMIC DNA]</scope>
    <source>
        <strain>K84 / ATCC BAA-868</strain>
    </source>
</reference>
<dbReference type="EC" id="5.4.2.11" evidence="1"/>
<dbReference type="EMBL" id="CP000628">
    <property type="protein sequence ID" value="ACM25019.1"/>
    <property type="molecule type" value="Genomic_DNA"/>
</dbReference>
<dbReference type="RefSeq" id="WP_007702987.1">
    <property type="nucleotide sequence ID" value="NC_011985.1"/>
</dbReference>
<dbReference type="SMR" id="B9J6R3"/>
<dbReference type="STRING" id="311403.Arad_0294"/>
<dbReference type="KEGG" id="ara:Arad_0294"/>
<dbReference type="eggNOG" id="COG0588">
    <property type="taxonomic scope" value="Bacteria"/>
</dbReference>
<dbReference type="HOGENOM" id="CLU_033323_1_4_5"/>
<dbReference type="UniPathway" id="UPA00109">
    <property type="reaction ID" value="UER00186"/>
</dbReference>
<dbReference type="Proteomes" id="UP000001600">
    <property type="component" value="Chromosome 1"/>
</dbReference>
<dbReference type="GO" id="GO:0004619">
    <property type="term" value="F:phosphoglycerate mutase activity"/>
    <property type="evidence" value="ECO:0007669"/>
    <property type="project" value="UniProtKB-EC"/>
</dbReference>
<dbReference type="GO" id="GO:0006094">
    <property type="term" value="P:gluconeogenesis"/>
    <property type="evidence" value="ECO:0007669"/>
    <property type="project" value="UniProtKB-UniRule"/>
</dbReference>
<dbReference type="GO" id="GO:0006096">
    <property type="term" value="P:glycolytic process"/>
    <property type="evidence" value="ECO:0007669"/>
    <property type="project" value="UniProtKB-UniRule"/>
</dbReference>
<dbReference type="CDD" id="cd07067">
    <property type="entry name" value="HP_PGM_like"/>
    <property type="match status" value="1"/>
</dbReference>
<dbReference type="Gene3D" id="3.40.50.1240">
    <property type="entry name" value="Phosphoglycerate mutase-like"/>
    <property type="match status" value="1"/>
</dbReference>
<dbReference type="HAMAP" id="MF_01039">
    <property type="entry name" value="PGAM_GpmA"/>
    <property type="match status" value="1"/>
</dbReference>
<dbReference type="InterPro" id="IPR013078">
    <property type="entry name" value="His_Pase_superF_clade-1"/>
</dbReference>
<dbReference type="InterPro" id="IPR029033">
    <property type="entry name" value="His_PPase_superfam"/>
</dbReference>
<dbReference type="InterPro" id="IPR001345">
    <property type="entry name" value="PG/BPGM_mutase_AS"/>
</dbReference>
<dbReference type="InterPro" id="IPR005952">
    <property type="entry name" value="Phosphogly_mut1"/>
</dbReference>
<dbReference type="NCBIfam" id="TIGR01258">
    <property type="entry name" value="pgm_1"/>
    <property type="match status" value="2"/>
</dbReference>
<dbReference type="NCBIfam" id="NF002339">
    <property type="entry name" value="PRK01295.1"/>
    <property type="match status" value="1"/>
</dbReference>
<dbReference type="PANTHER" id="PTHR11931">
    <property type="entry name" value="PHOSPHOGLYCERATE MUTASE"/>
    <property type="match status" value="1"/>
</dbReference>
<dbReference type="Pfam" id="PF00300">
    <property type="entry name" value="His_Phos_1"/>
    <property type="match status" value="1"/>
</dbReference>
<dbReference type="PIRSF" id="PIRSF000709">
    <property type="entry name" value="6PFK_2-Ptase"/>
    <property type="match status" value="1"/>
</dbReference>
<dbReference type="SMART" id="SM00855">
    <property type="entry name" value="PGAM"/>
    <property type="match status" value="1"/>
</dbReference>
<dbReference type="SUPFAM" id="SSF53254">
    <property type="entry name" value="Phosphoglycerate mutase-like"/>
    <property type="match status" value="1"/>
</dbReference>
<dbReference type="PROSITE" id="PS00175">
    <property type="entry name" value="PG_MUTASE"/>
    <property type="match status" value="1"/>
</dbReference>
<sequence>MSGTLVLVRHGQSDWNLKNLFTGWKDPDLTALGVEEAKTGGKALADYGIKYDIAFTSVLTRAQHTLKIILDEVGQPGLETIKDQALNERDYGDLSGLNKDDARAKWGEEQVHIWRRSYDVPPPGGESLRDTGARVWPYYLTEILPRVLAGQKVLVAAHGNSLRSLVMVLDRLTKEQILALNLATGVPMVYKLNADSTVASKEVLGDMSGAH</sequence>
<accession>B9J6R3</accession>
<organism>
    <name type="scientific">Rhizobium rhizogenes (strain K84 / ATCC BAA-868)</name>
    <name type="common">Agrobacterium radiobacter</name>
    <dbReference type="NCBI Taxonomy" id="311403"/>
    <lineage>
        <taxon>Bacteria</taxon>
        <taxon>Pseudomonadati</taxon>
        <taxon>Pseudomonadota</taxon>
        <taxon>Alphaproteobacteria</taxon>
        <taxon>Hyphomicrobiales</taxon>
        <taxon>Rhizobiaceae</taxon>
        <taxon>Rhizobium/Agrobacterium group</taxon>
        <taxon>Rhizobium</taxon>
    </lineage>
</organism>
<gene>
    <name evidence="1" type="primary">gpmA</name>
    <name type="ordered locus">Arad_0294</name>
</gene>
<comment type="function">
    <text evidence="1">Catalyzes the interconversion of 2-phosphoglycerate and 3-phosphoglycerate.</text>
</comment>
<comment type="catalytic activity">
    <reaction evidence="1">
        <text>(2R)-2-phosphoglycerate = (2R)-3-phosphoglycerate</text>
        <dbReference type="Rhea" id="RHEA:15901"/>
        <dbReference type="ChEBI" id="CHEBI:58272"/>
        <dbReference type="ChEBI" id="CHEBI:58289"/>
        <dbReference type="EC" id="5.4.2.11"/>
    </reaction>
</comment>
<comment type="pathway">
    <text evidence="1">Carbohydrate degradation; glycolysis; pyruvate from D-glyceraldehyde 3-phosphate: step 3/5.</text>
</comment>
<comment type="subunit">
    <text evidence="1">Homodimer.</text>
</comment>
<comment type="similarity">
    <text evidence="1">Belongs to the phosphoglycerate mutase family. BPG-dependent PGAM subfamily.</text>
</comment>
<protein>
    <recommendedName>
        <fullName evidence="1">2,3-bisphosphoglycerate-dependent phosphoglycerate mutase</fullName>
        <shortName evidence="1">BPG-dependent PGAM</shortName>
        <shortName evidence="1">PGAM</shortName>
        <shortName evidence="1">Phosphoglyceromutase</shortName>
        <shortName evidence="1">dPGM</shortName>
        <ecNumber evidence="1">5.4.2.11</ecNumber>
    </recommendedName>
</protein>
<evidence type="ECO:0000255" key="1">
    <source>
        <dbReference type="HAMAP-Rule" id="MF_01039"/>
    </source>
</evidence>
<proteinExistence type="inferred from homology"/>
<keyword id="KW-0312">Gluconeogenesis</keyword>
<keyword id="KW-0324">Glycolysis</keyword>
<keyword id="KW-0413">Isomerase</keyword>
<name>GPMA_RHIR8</name>